<gene>
    <name evidence="1" type="primary">rimM</name>
    <name type="ordered locus">GFO_3031</name>
</gene>
<protein>
    <recommendedName>
        <fullName evidence="1">Ribosome maturation factor RimM</fullName>
    </recommendedName>
</protein>
<dbReference type="EMBL" id="CU207366">
    <property type="protein sequence ID" value="CAL67975.1"/>
    <property type="molecule type" value="Genomic_DNA"/>
</dbReference>
<dbReference type="RefSeq" id="WP_011710876.1">
    <property type="nucleotide sequence ID" value="NC_008571.1"/>
</dbReference>
<dbReference type="SMR" id="A0M5T0"/>
<dbReference type="STRING" id="411154.GFO_3031"/>
<dbReference type="KEGG" id="gfo:GFO_3031"/>
<dbReference type="eggNOG" id="COG0806">
    <property type="taxonomic scope" value="Bacteria"/>
</dbReference>
<dbReference type="HOGENOM" id="CLU_077636_4_1_10"/>
<dbReference type="OrthoDB" id="9810331at2"/>
<dbReference type="Proteomes" id="UP000000755">
    <property type="component" value="Chromosome"/>
</dbReference>
<dbReference type="GO" id="GO:0005737">
    <property type="term" value="C:cytoplasm"/>
    <property type="evidence" value="ECO:0007669"/>
    <property type="project" value="UniProtKB-SubCell"/>
</dbReference>
<dbReference type="GO" id="GO:0005840">
    <property type="term" value="C:ribosome"/>
    <property type="evidence" value="ECO:0007669"/>
    <property type="project" value="InterPro"/>
</dbReference>
<dbReference type="GO" id="GO:0043022">
    <property type="term" value="F:ribosome binding"/>
    <property type="evidence" value="ECO:0007669"/>
    <property type="project" value="InterPro"/>
</dbReference>
<dbReference type="GO" id="GO:0042274">
    <property type="term" value="P:ribosomal small subunit biogenesis"/>
    <property type="evidence" value="ECO:0007669"/>
    <property type="project" value="UniProtKB-UniRule"/>
</dbReference>
<dbReference type="GO" id="GO:0006364">
    <property type="term" value="P:rRNA processing"/>
    <property type="evidence" value="ECO:0007669"/>
    <property type="project" value="UniProtKB-UniRule"/>
</dbReference>
<dbReference type="Gene3D" id="2.30.30.240">
    <property type="entry name" value="PRC-barrel domain"/>
    <property type="match status" value="1"/>
</dbReference>
<dbReference type="Gene3D" id="2.40.30.60">
    <property type="entry name" value="RimM"/>
    <property type="match status" value="1"/>
</dbReference>
<dbReference type="HAMAP" id="MF_00014">
    <property type="entry name" value="Ribosome_mat_RimM"/>
    <property type="match status" value="1"/>
</dbReference>
<dbReference type="InterPro" id="IPR011033">
    <property type="entry name" value="PRC_barrel-like_sf"/>
</dbReference>
<dbReference type="InterPro" id="IPR056792">
    <property type="entry name" value="PRC_RimM"/>
</dbReference>
<dbReference type="InterPro" id="IPR011961">
    <property type="entry name" value="RimM"/>
</dbReference>
<dbReference type="InterPro" id="IPR002676">
    <property type="entry name" value="RimM_N"/>
</dbReference>
<dbReference type="InterPro" id="IPR036976">
    <property type="entry name" value="RimM_N_sf"/>
</dbReference>
<dbReference type="InterPro" id="IPR009000">
    <property type="entry name" value="Transl_B-barrel_sf"/>
</dbReference>
<dbReference type="NCBIfam" id="TIGR02273">
    <property type="entry name" value="16S_RimM"/>
    <property type="match status" value="1"/>
</dbReference>
<dbReference type="PANTHER" id="PTHR33692">
    <property type="entry name" value="RIBOSOME MATURATION FACTOR RIMM"/>
    <property type="match status" value="1"/>
</dbReference>
<dbReference type="PANTHER" id="PTHR33692:SF1">
    <property type="entry name" value="RIBOSOME MATURATION FACTOR RIMM"/>
    <property type="match status" value="1"/>
</dbReference>
<dbReference type="Pfam" id="PF24986">
    <property type="entry name" value="PRC_RimM"/>
    <property type="match status" value="1"/>
</dbReference>
<dbReference type="Pfam" id="PF01782">
    <property type="entry name" value="RimM"/>
    <property type="match status" value="1"/>
</dbReference>
<dbReference type="SUPFAM" id="SSF50346">
    <property type="entry name" value="PRC-barrel domain"/>
    <property type="match status" value="1"/>
</dbReference>
<dbReference type="SUPFAM" id="SSF50447">
    <property type="entry name" value="Translation proteins"/>
    <property type="match status" value="1"/>
</dbReference>
<accession>A0M5T0</accession>
<proteinExistence type="inferred from homology"/>
<sequence>MTKEECFYLGKIVAKFSFKGEVLIKLDTDEPETYTEMESVLVEYNDNLVPFFIERSYLHKSTLLRAKFEDIETEEDAEDMIGAHVYLPLSMLPKLPEDKFYFHEIIGFNVIDAEHGNIGKIVSINDSTAQALFEIEKDGKQILIPMNDEFIEKVDKKNNTVRVITPEGLVELYLG</sequence>
<comment type="function">
    <text evidence="1">An accessory protein needed during the final step in the assembly of 30S ribosomal subunit, possibly for assembly of the head region. Essential for efficient processing of 16S rRNA. May be needed both before and after RbfA during the maturation of 16S rRNA. It has affinity for free ribosomal 30S subunits but not for 70S ribosomes.</text>
</comment>
<comment type="subunit">
    <text evidence="1">Binds ribosomal protein uS19.</text>
</comment>
<comment type="subcellular location">
    <subcellularLocation>
        <location evidence="1">Cytoplasm</location>
    </subcellularLocation>
</comment>
<comment type="domain">
    <text evidence="1">The PRC barrel domain binds ribosomal protein uS19.</text>
</comment>
<comment type="similarity">
    <text evidence="1">Belongs to the RimM family.</text>
</comment>
<evidence type="ECO:0000255" key="1">
    <source>
        <dbReference type="HAMAP-Rule" id="MF_00014"/>
    </source>
</evidence>
<organism>
    <name type="scientific">Christiangramia forsetii (strain DSM 17595 / CGMCC 1.15422 / KT0803)</name>
    <name type="common">Gramella forsetii</name>
    <dbReference type="NCBI Taxonomy" id="411154"/>
    <lineage>
        <taxon>Bacteria</taxon>
        <taxon>Pseudomonadati</taxon>
        <taxon>Bacteroidota</taxon>
        <taxon>Flavobacteriia</taxon>
        <taxon>Flavobacteriales</taxon>
        <taxon>Flavobacteriaceae</taxon>
        <taxon>Christiangramia</taxon>
    </lineage>
</organism>
<reference key="1">
    <citation type="journal article" date="2006" name="Environ. Microbiol.">
        <title>Whole genome analysis of the marine Bacteroidetes'Gramella forsetii' reveals adaptations to degradation of polymeric organic matter.</title>
        <authorList>
            <person name="Bauer M."/>
            <person name="Kube M."/>
            <person name="Teeling H."/>
            <person name="Richter M."/>
            <person name="Lombardot T."/>
            <person name="Allers E."/>
            <person name="Wuerdemann C.A."/>
            <person name="Quast C."/>
            <person name="Kuhl H."/>
            <person name="Knaust F."/>
            <person name="Woebken D."/>
            <person name="Bischof K."/>
            <person name="Mussmann M."/>
            <person name="Choudhuri J.V."/>
            <person name="Meyer F."/>
            <person name="Reinhardt R."/>
            <person name="Amann R.I."/>
            <person name="Gloeckner F.O."/>
        </authorList>
    </citation>
    <scope>NUCLEOTIDE SEQUENCE [LARGE SCALE GENOMIC DNA]</scope>
    <source>
        <strain>DSM 17595 / CGMCC 1.15422 / KT0803</strain>
    </source>
</reference>
<feature type="chain" id="PRO_0000321730" description="Ribosome maturation factor RimM">
    <location>
        <begin position="1"/>
        <end position="175"/>
    </location>
</feature>
<feature type="domain" description="PRC barrel" evidence="1">
    <location>
        <begin position="97"/>
        <end position="169"/>
    </location>
</feature>
<keyword id="KW-0143">Chaperone</keyword>
<keyword id="KW-0963">Cytoplasm</keyword>
<keyword id="KW-0690">Ribosome biogenesis</keyword>
<keyword id="KW-0698">rRNA processing</keyword>
<name>RIMM_CHRFK</name>